<keyword id="KW-0004">4Fe-4S</keyword>
<keyword id="KW-0148">Chlorophyll</keyword>
<keyword id="KW-0150">Chloroplast</keyword>
<keyword id="KW-0157">Chromophore</keyword>
<keyword id="KW-0249">Electron transport</keyword>
<keyword id="KW-0408">Iron</keyword>
<keyword id="KW-0411">Iron-sulfur</keyword>
<keyword id="KW-0460">Magnesium</keyword>
<keyword id="KW-0472">Membrane</keyword>
<keyword id="KW-0479">Metal-binding</keyword>
<keyword id="KW-0560">Oxidoreductase</keyword>
<keyword id="KW-0602">Photosynthesis</keyword>
<keyword id="KW-0603">Photosystem I</keyword>
<keyword id="KW-0934">Plastid</keyword>
<keyword id="KW-1185">Reference proteome</keyword>
<keyword id="KW-0793">Thylakoid</keyword>
<keyword id="KW-0812">Transmembrane</keyword>
<keyword id="KW-1133">Transmembrane helix</keyword>
<keyword id="KW-0813">Transport</keyword>
<accession>Q27S51</accession>
<accession>Q2VEH8</accession>
<reference key="1">
    <citation type="journal article" date="2006" name="Plant Cell Rep.">
        <title>The complete chloroplast genome sequences of Solanum tuberosum and comparative analysis with Solanaceae species identified the presence of a 241-bp deletion in cultivated potato chloroplast DNA sequence.</title>
        <authorList>
            <person name="Chung H.-J."/>
            <person name="Jung J.D."/>
            <person name="Park H.-W."/>
            <person name="Kim J.-H."/>
            <person name="Cha H.W."/>
            <person name="Min S.R."/>
            <person name="Jeong W.-J."/>
            <person name="Liu J.R."/>
        </authorList>
    </citation>
    <scope>NUCLEOTIDE SEQUENCE [LARGE SCALE GENOMIC DNA]</scope>
    <source>
        <strain>cv. Desiree</strain>
    </source>
</reference>
<reference key="2">
    <citation type="submission" date="2006-02" db="EMBL/GenBank/DDBJ databases">
        <title>Complete chloroplast genome sequences of Solanum tuberosum cultivar Desiree and comparative analyses with other Solanaceae genomes.</title>
        <authorList>
            <person name="Gargano D."/>
            <person name="Scotti N."/>
            <person name="Vezzi A."/>
            <person name="Bilardi A."/>
            <person name="Valle G."/>
            <person name="Grillo S."/>
            <person name="Cardi T."/>
        </authorList>
    </citation>
    <scope>NUCLEOTIDE SEQUENCE [LARGE SCALE GENOMIC DNA]</scope>
    <source>
        <strain>cv. Desiree</strain>
    </source>
</reference>
<protein>
    <recommendedName>
        <fullName evidence="1">Photosystem I P700 chlorophyll a apoprotein A2</fullName>
        <ecNumber evidence="1">1.97.1.12</ecNumber>
    </recommendedName>
    <alternativeName>
        <fullName evidence="1">PSI-B</fullName>
    </alternativeName>
    <alternativeName>
        <fullName evidence="1">PsaB</fullName>
    </alternativeName>
</protein>
<dbReference type="EC" id="1.97.1.12" evidence="1"/>
<dbReference type="EMBL" id="DQ231562">
    <property type="protein sequence ID" value="ABB90040.1"/>
    <property type="molecule type" value="Genomic_DNA"/>
</dbReference>
<dbReference type="EMBL" id="DQ386163">
    <property type="protein sequence ID" value="ABD47056.1"/>
    <property type="molecule type" value="Genomic_DNA"/>
</dbReference>
<dbReference type="RefSeq" id="YP_635638.1">
    <property type="nucleotide sequence ID" value="NC_008096.2"/>
</dbReference>
<dbReference type="SMR" id="Q27S51"/>
<dbReference type="FunCoup" id="Q27S51">
    <property type="interactions" value="333"/>
</dbReference>
<dbReference type="STRING" id="4113.Q27S51"/>
<dbReference type="GeneID" id="4099968"/>
<dbReference type="KEGG" id="sot:4099968"/>
<dbReference type="InParanoid" id="Q27S51"/>
<dbReference type="OrthoDB" id="1699083at2759"/>
<dbReference type="Proteomes" id="UP000011115">
    <property type="component" value="Unassembled WGS sequence"/>
</dbReference>
<dbReference type="ExpressionAtlas" id="Q27S51">
    <property type="expression patterns" value="baseline"/>
</dbReference>
<dbReference type="GO" id="GO:0009535">
    <property type="term" value="C:chloroplast thylakoid membrane"/>
    <property type="evidence" value="ECO:0007669"/>
    <property type="project" value="UniProtKB-SubCell"/>
</dbReference>
<dbReference type="GO" id="GO:0009522">
    <property type="term" value="C:photosystem I"/>
    <property type="evidence" value="ECO:0007669"/>
    <property type="project" value="UniProtKB-KW"/>
</dbReference>
<dbReference type="GO" id="GO:0051539">
    <property type="term" value="F:4 iron, 4 sulfur cluster binding"/>
    <property type="evidence" value="ECO:0007669"/>
    <property type="project" value="UniProtKB-KW"/>
</dbReference>
<dbReference type="GO" id="GO:0016168">
    <property type="term" value="F:chlorophyll binding"/>
    <property type="evidence" value="ECO:0007669"/>
    <property type="project" value="UniProtKB-KW"/>
</dbReference>
<dbReference type="GO" id="GO:0009055">
    <property type="term" value="F:electron transfer activity"/>
    <property type="evidence" value="ECO:0007669"/>
    <property type="project" value="UniProtKB-UniRule"/>
</dbReference>
<dbReference type="GO" id="GO:0000287">
    <property type="term" value="F:magnesium ion binding"/>
    <property type="evidence" value="ECO:0007669"/>
    <property type="project" value="UniProtKB-UniRule"/>
</dbReference>
<dbReference type="GO" id="GO:0016491">
    <property type="term" value="F:oxidoreductase activity"/>
    <property type="evidence" value="ECO:0007669"/>
    <property type="project" value="UniProtKB-KW"/>
</dbReference>
<dbReference type="GO" id="GO:0015979">
    <property type="term" value="P:photosynthesis"/>
    <property type="evidence" value="ECO:0007669"/>
    <property type="project" value="UniProtKB-UniRule"/>
</dbReference>
<dbReference type="FunFam" id="1.20.1130.10:FF:000001">
    <property type="entry name" value="Photosystem I P700 chlorophyll a apoprotein A2"/>
    <property type="match status" value="1"/>
</dbReference>
<dbReference type="Gene3D" id="1.20.1130.10">
    <property type="entry name" value="Photosystem I PsaA/PsaB"/>
    <property type="match status" value="1"/>
</dbReference>
<dbReference type="HAMAP" id="MF_00482">
    <property type="entry name" value="PSI_PsaB"/>
    <property type="match status" value="1"/>
</dbReference>
<dbReference type="InterPro" id="IPR001280">
    <property type="entry name" value="PSI_PsaA/B"/>
</dbReference>
<dbReference type="InterPro" id="IPR020586">
    <property type="entry name" value="PSI_PsaA/B_CS"/>
</dbReference>
<dbReference type="InterPro" id="IPR036408">
    <property type="entry name" value="PSI_PsaA/B_sf"/>
</dbReference>
<dbReference type="InterPro" id="IPR006244">
    <property type="entry name" value="PSI_PsaB"/>
</dbReference>
<dbReference type="NCBIfam" id="TIGR01336">
    <property type="entry name" value="psaB"/>
    <property type="match status" value="1"/>
</dbReference>
<dbReference type="PANTHER" id="PTHR30128">
    <property type="entry name" value="OUTER MEMBRANE PROTEIN, OMPA-RELATED"/>
    <property type="match status" value="1"/>
</dbReference>
<dbReference type="PANTHER" id="PTHR30128:SF19">
    <property type="entry name" value="PHOTOSYSTEM I P700 CHLOROPHYLL A APOPROTEIN A1-RELATED"/>
    <property type="match status" value="1"/>
</dbReference>
<dbReference type="Pfam" id="PF00223">
    <property type="entry name" value="PsaA_PsaB"/>
    <property type="match status" value="1"/>
</dbReference>
<dbReference type="PIRSF" id="PIRSF002905">
    <property type="entry name" value="PSI_A"/>
    <property type="match status" value="1"/>
</dbReference>
<dbReference type="PRINTS" id="PR00257">
    <property type="entry name" value="PHOTSYSPSAAB"/>
</dbReference>
<dbReference type="SUPFAM" id="SSF81558">
    <property type="entry name" value="Photosystem I subunits PsaA/PsaB"/>
    <property type="match status" value="1"/>
</dbReference>
<dbReference type="PROSITE" id="PS00419">
    <property type="entry name" value="PHOTOSYSTEM_I_PSAAB"/>
    <property type="match status" value="1"/>
</dbReference>
<geneLocation type="chloroplast"/>
<sequence length="734" mass="82428">MALRFPRFSQGLAQDPTTRRIWFGIATAHDFESHDDITEERLYQNIFASHFGQLAIIFLWTSGNLFHVAWQGNFESWVQDPLHVRPIAHAIWDPHFGQPAVEAFTRGGALGPVNIAYSGVYQWWYTIGLRTNEDLYTGALFLLFLSAISLIAGWLHLQPKWKPSVSWFKNAESRLNHHLSGLFGVSSLAWTGHLVHVAIPASRGEYVRWNNFLDVLPHPQGLGPLFTGQWNLYAQNPDSSSHLFGTAEGAGTAILTLLGGFHPQTQSLWLTDMAHHHLAIAFIFLVAGHMYRTNFGIGHSMKDLLDAHIPPGGRLGRGHKGLYDTINNSLHFQLGLALASLGVITSLVAQHMYSLPAYAFIAQDFTTQAALYTHHQYIAGFIMTGAFAHGAIFFIRDYNPEQNEDNVLARMLDHKEAIISHLSWASLFLGFHTLGLYVHNDVMLAFGTPEKQILIEPIFAQWIQSAHGKTSYGFDVLLSSTTGPAFNAGRSIWLPGWLNAVNENSNSLFLTIGPGDFLVHHAIALGLHTTTLILVKGALDARGSKLMPDKKDFGYSFPCDGPGRGGTCDISAWDAFYLAVFWMLNTIGWVTFYWHWKHITLWQGNVSQFNESSTYLMGWLRDYLWLNSSQLINGYNPFGMNSLSVWAWMFLFGHLVWATGFMFLISWRGYWQELIETLAWAHERTPLANLIRWRDKPVALSIVQARLVGLAHFSVGYIFTYAAFLIASTSGKFG</sequence>
<proteinExistence type="inferred from homology"/>
<organism>
    <name type="scientific">Solanum tuberosum</name>
    <name type="common">Potato</name>
    <dbReference type="NCBI Taxonomy" id="4113"/>
    <lineage>
        <taxon>Eukaryota</taxon>
        <taxon>Viridiplantae</taxon>
        <taxon>Streptophyta</taxon>
        <taxon>Embryophyta</taxon>
        <taxon>Tracheophyta</taxon>
        <taxon>Spermatophyta</taxon>
        <taxon>Magnoliopsida</taxon>
        <taxon>eudicotyledons</taxon>
        <taxon>Gunneridae</taxon>
        <taxon>Pentapetalae</taxon>
        <taxon>asterids</taxon>
        <taxon>lamiids</taxon>
        <taxon>Solanales</taxon>
        <taxon>Solanaceae</taxon>
        <taxon>Solanoideae</taxon>
        <taxon>Solaneae</taxon>
        <taxon>Solanum</taxon>
    </lineage>
</organism>
<gene>
    <name evidence="1" type="primary">psaB</name>
</gene>
<name>PSAB_SOLTU</name>
<feature type="chain" id="PRO_0000277134" description="Photosystem I P700 chlorophyll a apoprotein A2">
    <location>
        <begin position="1"/>
        <end position="734"/>
    </location>
</feature>
<feature type="transmembrane region" description="Helical; Name=I" evidence="1">
    <location>
        <begin position="46"/>
        <end position="69"/>
    </location>
</feature>
<feature type="transmembrane region" description="Helical; Name=II" evidence="1">
    <location>
        <begin position="135"/>
        <end position="158"/>
    </location>
</feature>
<feature type="transmembrane region" description="Helical; Name=III" evidence="1">
    <location>
        <begin position="175"/>
        <end position="199"/>
    </location>
</feature>
<feature type="transmembrane region" description="Helical; Name=IV" evidence="1">
    <location>
        <begin position="273"/>
        <end position="291"/>
    </location>
</feature>
<feature type="transmembrane region" description="Helical; Name=V" evidence="1">
    <location>
        <begin position="330"/>
        <end position="353"/>
    </location>
</feature>
<feature type="transmembrane region" description="Helical; Name=VI" evidence="1">
    <location>
        <begin position="369"/>
        <end position="395"/>
    </location>
</feature>
<feature type="transmembrane region" description="Helical; Name=VII" evidence="1">
    <location>
        <begin position="417"/>
        <end position="439"/>
    </location>
</feature>
<feature type="transmembrane region" description="Helical; Name=VIII" evidence="1">
    <location>
        <begin position="517"/>
        <end position="535"/>
    </location>
</feature>
<feature type="transmembrane region" description="Helical; Name=IX" evidence="1">
    <location>
        <begin position="575"/>
        <end position="596"/>
    </location>
</feature>
<feature type="transmembrane region" description="Helical; Name=X" evidence="1">
    <location>
        <begin position="643"/>
        <end position="665"/>
    </location>
</feature>
<feature type="transmembrane region" description="Helical; Name=XI" evidence="1">
    <location>
        <begin position="707"/>
        <end position="727"/>
    </location>
</feature>
<feature type="binding site" evidence="1">
    <location>
        <position position="559"/>
    </location>
    <ligand>
        <name>[4Fe-4S] cluster</name>
        <dbReference type="ChEBI" id="CHEBI:49883"/>
        <note>ligand shared between dimeric partners</note>
    </ligand>
</feature>
<feature type="binding site" evidence="1">
    <location>
        <position position="568"/>
    </location>
    <ligand>
        <name>[4Fe-4S] cluster</name>
        <dbReference type="ChEBI" id="CHEBI:49883"/>
        <note>ligand shared between dimeric partners</note>
    </ligand>
</feature>
<feature type="binding site" description="axial binding residue" evidence="1">
    <location>
        <position position="654"/>
    </location>
    <ligand>
        <name>chlorophyll a</name>
        <dbReference type="ChEBI" id="CHEBI:58416"/>
        <label>B1</label>
    </ligand>
    <ligandPart>
        <name>Mg</name>
        <dbReference type="ChEBI" id="CHEBI:25107"/>
    </ligandPart>
</feature>
<feature type="binding site" description="axial binding residue" evidence="1">
    <location>
        <position position="662"/>
    </location>
    <ligand>
        <name>chlorophyll a</name>
        <dbReference type="ChEBI" id="CHEBI:58416"/>
        <label>B3</label>
    </ligand>
    <ligandPart>
        <name>Mg</name>
        <dbReference type="ChEBI" id="CHEBI:25107"/>
    </ligandPart>
</feature>
<feature type="binding site" evidence="1">
    <location>
        <position position="670"/>
    </location>
    <ligand>
        <name>chlorophyll a</name>
        <dbReference type="ChEBI" id="CHEBI:58416"/>
        <label>B3</label>
    </ligand>
</feature>
<feature type="binding site" evidence="1">
    <location>
        <position position="671"/>
    </location>
    <ligand>
        <name>phylloquinone</name>
        <dbReference type="ChEBI" id="CHEBI:18067"/>
        <label>B</label>
    </ligand>
</feature>
<feature type="sequence conflict" description="In Ref. 1; ABB90040." evidence="2" ref="1">
    <original>F</original>
    <variation>V</variation>
    <location>
        <position position="365"/>
    </location>
</feature>
<feature type="sequence conflict" description="In Ref. 1; ABB90040." evidence="2" ref="1">
    <original>T</original>
    <variation>N</variation>
    <location>
        <position position="677"/>
    </location>
</feature>
<feature type="sequence conflict" description="In Ref. 1; ABB90040." evidence="2" ref="1">
    <original>A</original>
    <variation>G</variation>
    <location>
        <position position="681"/>
    </location>
</feature>
<feature type="sequence conflict" description="In Ref. 1; ABB90040." evidence="2" ref="1">
    <original>LAH</original>
    <variation>IDQ</variation>
    <location>
        <begin position="710"/>
        <end position="712"/>
    </location>
</feature>
<feature type="sequence conflict" description="In Ref. 1; ABB90040." evidence="2" ref="1">
    <original>T</original>
    <variation>N</variation>
    <location>
        <position position="720"/>
    </location>
</feature>
<feature type="sequence conflict" description="In Ref. 1; ABB90040." evidence="2" ref="1">
    <original>AS</original>
    <variation>DY</variation>
    <location>
        <begin position="727"/>
        <end position="728"/>
    </location>
</feature>
<evidence type="ECO:0000255" key="1">
    <source>
        <dbReference type="HAMAP-Rule" id="MF_00482"/>
    </source>
</evidence>
<evidence type="ECO:0000305" key="2"/>
<comment type="function">
    <text evidence="1">PsaA and PsaB bind P700, the primary electron donor of photosystem I (PSI), as well as the electron acceptors A0, A1 and FX. PSI is a plastocyanin-ferredoxin oxidoreductase, converting photonic excitation into a charge separation, which transfers an electron from the donor P700 chlorophyll pair to the spectroscopically characterized acceptors A0, A1, FX, FA and FB in turn. Oxidized P700 is reduced on the lumenal side of the thylakoid membrane by plastocyanin.</text>
</comment>
<comment type="catalytic activity">
    <reaction evidence="1">
        <text>reduced [plastocyanin] + hnu + oxidized [2Fe-2S]-[ferredoxin] = oxidized [plastocyanin] + reduced [2Fe-2S]-[ferredoxin]</text>
        <dbReference type="Rhea" id="RHEA:30407"/>
        <dbReference type="Rhea" id="RHEA-COMP:10000"/>
        <dbReference type="Rhea" id="RHEA-COMP:10001"/>
        <dbReference type="Rhea" id="RHEA-COMP:10039"/>
        <dbReference type="Rhea" id="RHEA-COMP:10040"/>
        <dbReference type="ChEBI" id="CHEBI:29036"/>
        <dbReference type="ChEBI" id="CHEBI:30212"/>
        <dbReference type="ChEBI" id="CHEBI:33737"/>
        <dbReference type="ChEBI" id="CHEBI:33738"/>
        <dbReference type="ChEBI" id="CHEBI:49552"/>
        <dbReference type="EC" id="1.97.1.12"/>
    </reaction>
</comment>
<comment type="cofactor">
    <text evidence="1">P700 is a chlorophyll a/chlorophyll a' dimer, A0 is one or more chlorophyll a, A1 is one or both phylloquinones and FX is a shared 4Fe-4S iron-sulfur center.</text>
</comment>
<comment type="subunit">
    <text evidence="1">The PsaA/B heterodimer binds the P700 chlorophyll special pair and subsequent electron acceptors. PSI consists of a core antenna complex that captures photons, and an electron transfer chain that converts photonic excitation into a charge separation. The eukaryotic PSI reaction center is composed of at least 11 subunits.</text>
</comment>
<comment type="subcellular location">
    <subcellularLocation>
        <location>Plastid</location>
        <location>Chloroplast thylakoid membrane</location>
        <topology>Multi-pass membrane protein</topology>
    </subcellularLocation>
</comment>
<comment type="similarity">
    <text evidence="1">Belongs to the PsaA/PsaB family.</text>
</comment>